<reference key="1">
    <citation type="submission" date="2003-09" db="EMBL/GenBank/DDBJ databases">
        <title>A phylogeny of the pinnipeds from mitochondrial and single copy nuclear gene sequences.</title>
        <authorList>
            <person name="Kinnear M.W."/>
            <person name="Walker G."/>
            <person name="Amos W."/>
        </authorList>
    </citation>
    <scope>NUCLEOTIDE SEQUENCE [GENOMIC DNA]</scope>
</reference>
<sequence>MFGVLNSSDHRAAVQQRNIPAFGRTSFELWTDNPTSNYRCETGGNGRDSGQNRVRRPMNAFMVWSRDQRRRVALENPQMKNSEISKQLGYQWKMLTEAEKWPFFEEAQRLQAMHREKYPDYKYRPRPKALPQKSDKLLPAASSSMLCRQVLVDEKWYPFTYRDSCSRAAHPRMEDQLSSSQPVNIANSLLQQEHHYCSTSLRDSPETLAMHLSADPPFYPK</sequence>
<evidence type="ECO:0000250" key="1">
    <source>
        <dbReference type="UniProtKB" id="P36394"/>
    </source>
</evidence>
<evidence type="ECO:0000250" key="2">
    <source>
        <dbReference type="UniProtKB" id="Q05066"/>
    </source>
</evidence>
<evidence type="ECO:0000255" key="3">
    <source>
        <dbReference type="PROSITE-ProRule" id="PRU00267"/>
    </source>
</evidence>
<evidence type="ECO:0000305" key="4"/>
<comment type="function">
    <text evidence="1 2">Transcriptional regulator that controls a genetic switch in male development. It is necessary and sufficient for initiating male sex determination by directing the development of supporting cell precursors (pre-Sertoli cells) as Sertoli rather than granulosa cells. Involved in different aspects of gene regulation including promoter activation or repression. Binds to the DNA consensus sequence 5'-[AT]AACAA[AT]-3'. SRY HMG box recognizes DNA by partial intercalation in the minor groove and promotes DNA bending. Also involved in pre-mRNA splicing (By similarity). In male adult brain involved in the maintenance of motor functions of dopaminergic neurons (By similarity).</text>
</comment>
<comment type="subunit">
    <text evidence="2">Interacts with CALM, EP300, HDAC3, KPNB1, ZNF208 isoform KRAB-O, PARP1, SLC9A3R2 and WT1. The interaction with EP300 modulates its DNA-binding activity. The interaction with KPNB1 is sensitive to dissociation by Ran in the GTP-bound form. Interaction with PARP1 impaired its DNA-binding activity.</text>
</comment>
<comment type="subcellular location">
    <subcellularLocation>
        <location evidence="2">Nucleus speckle</location>
    </subcellularLocation>
    <subcellularLocation>
        <location evidence="2">Cytoplasm</location>
    </subcellularLocation>
    <subcellularLocation>
        <location evidence="2">Nucleus</location>
    </subcellularLocation>
</comment>
<comment type="similarity">
    <text evidence="4">Belongs to the SRY family.</text>
</comment>
<comment type="online information" name="Protein Spotlight">
    <link uri="https://www.proteinspotlight.org/back_issues/080"/>
    <text>The tenuous nature of sex - Issue 80 of March 2007</text>
</comment>
<proteinExistence type="inferred from homology"/>
<protein>
    <recommendedName>
        <fullName>Sex-determining region Y protein</fullName>
    </recommendedName>
    <alternativeName>
        <fullName>Testis-determining factor</fullName>
    </alternativeName>
</protein>
<organism>
    <name type="scientific">Neomonachus schauinslandi</name>
    <name type="common">Hawaiian monk seal</name>
    <name type="synonym">Monachus schauinslandi</name>
    <dbReference type="NCBI Taxonomy" id="29088"/>
    <lineage>
        <taxon>Eukaryota</taxon>
        <taxon>Metazoa</taxon>
        <taxon>Chordata</taxon>
        <taxon>Craniata</taxon>
        <taxon>Vertebrata</taxon>
        <taxon>Euteleostomi</taxon>
        <taxon>Mammalia</taxon>
        <taxon>Eutheria</taxon>
        <taxon>Laurasiatheria</taxon>
        <taxon>Carnivora</taxon>
        <taxon>Caniformia</taxon>
        <taxon>Pinnipedia</taxon>
        <taxon>Phocidae</taxon>
        <taxon>Monachinae</taxon>
        <taxon>Monachini</taxon>
        <taxon>Neomonachus</taxon>
    </lineage>
</organism>
<name>SRY_NEOSC</name>
<dbReference type="EMBL" id="AY424654">
    <property type="protein sequence ID" value="AAR10365.1"/>
    <property type="molecule type" value="Genomic_DNA"/>
</dbReference>
<dbReference type="RefSeq" id="XP_021548753.1">
    <property type="nucleotide sequence ID" value="XM_021693078.1"/>
</dbReference>
<dbReference type="SMR" id="Q6TC41"/>
<dbReference type="GeneID" id="110583023"/>
<dbReference type="InParanoid" id="Q6TC41"/>
<dbReference type="Proteomes" id="UP000248481">
    <property type="component" value="Unplaced"/>
</dbReference>
<dbReference type="GO" id="GO:0005737">
    <property type="term" value="C:cytoplasm"/>
    <property type="evidence" value="ECO:0007669"/>
    <property type="project" value="UniProtKB-SubCell"/>
</dbReference>
<dbReference type="GO" id="GO:0016607">
    <property type="term" value="C:nuclear speck"/>
    <property type="evidence" value="ECO:0007669"/>
    <property type="project" value="UniProtKB-SubCell"/>
</dbReference>
<dbReference type="GO" id="GO:0005634">
    <property type="term" value="C:nucleus"/>
    <property type="evidence" value="ECO:0000250"/>
    <property type="project" value="UniProtKB"/>
</dbReference>
<dbReference type="GO" id="GO:0005516">
    <property type="term" value="F:calmodulin binding"/>
    <property type="evidence" value="ECO:0007669"/>
    <property type="project" value="UniProtKB-KW"/>
</dbReference>
<dbReference type="GO" id="GO:0001228">
    <property type="term" value="F:DNA-binding transcription activator activity, RNA polymerase II-specific"/>
    <property type="evidence" value="ECO:0007669"/>
    <property type="project" value="TreeGrafter"/>
</dbReference>
<dbReference type="GO" id="GO:0000978">
    <property type="term" value="F:RNA polymerase II cis-regulatory region sequence-specific DNA binding"/>
    <property type="evidence" value="ECO:0007669"/>
    <property type="project" value="TreeGrafter"/>
</dbReference>
<dbReference type="GO" id="GO:0030154">
    <property type="term" value="P:cell differentiation"/>
    <property type="evidence" value="ECO:0007669"/>
    <property type="project" value="UniProtKB-KW"/>
</dbReference>
<dbReference type="GO" id="GO:0030238">
    <property type="term" value="P:male sex determination"/>
    <property type="evidence" value="ECO:0007669"/>
    <property type="project" value="InterPro"/>
</dbReference>
<dbReference type="GO" id="GO:0007548">
    <property type="term" value="P:sex differentiation"/>
    <property type="evidence" value="ECO:0007669"/>
    <property type="project" value="UniProtKB-KW"/>
</dbReference>
<dbReference type="CDD" id="cd22034">
    <property type="entry name" value="HMG-box_SoxA_SRY"/>
    <property type="match status" value="1"/>
</dbReference>
<dbReference type="FunFam" id="1.10.30.10:FF:000002">
    <property type="entry name" value="transcription factor Sox-2"/>
    <property type="match status" value="1"/>
</dbReference>
<dbReference type="Gene3D" id="1.10.30.10">
    <property type="entry name" value="High mobility group box domain"/>
    <property type="match status" value="1"/>
</dbReference>
<dbReference type="InterPro" id="IPR009071">
    <property type="entry name" value="HMG_box_dom"/>
</dbReference>
<dbReference type="InterPro" id="IPR036910">
    <property type="entry name" value="HMG_box_dom_sf"/>
</dbReference>
<dbReference type="InterPro" id="IPR017253">
    <property type="entry name" value="SRY"/>
</dbReference>
<dbReference type="InterPro" id="IPR050140">
    <property type="entry name" value="SRY-related_HMG-box_TF-like"/>
</dbReference>
<dbReference type="PANTHER" id="PTHR10270:SF161">
    <property type="entry name" value="SEX-DETERMINING REGION Y PROTEIN"/>
    <property type="match status" value="1"/>
</dbReference>
<dbReference type="PANTHER" id="PTHR10270">
    <property type="entry name" value="SOX TRANSCRIPTION FACTOR"/>
    <property type="match status" value="1"/>
</dbReference>
<dbReference type="Pfam" id="PF00505">
    <property type="entry name" value="HMG_box"/>
    <property type="match status" value="1"/>
</dbReference>
<dbReference type="PIRSF" id="PIRSF037653">
    <property type="entry name" value="SRY"/>
    <property type="match status" value="1"/>
</dbReference>
<dbReference type="SMART" id="SM00398">
    <property type="entry name" value="HMG"/>
    <property type="match status" value="1"/>
</dbReference>
<dbReference type="SUPFAM" id="SSF47095">
    <property type="entry name" value="HMG-box"/>
    <property type="match status" value="1"/>
</dbReference>
<dbReference type="PROSITE" id="PS50118">
    <property type="entry name" value="HMG_BOX_2"/>
    <property type="match status" value="1"/>
</dbReference>
<accession>Q6TC41</accession>
<keyword id="KW-0010">Activator</keyword>
<keyword id="KW-0112">Calmodulin-binding</keyword>
<keyword id="KW-0963">Cytoplasm</keyword>
<keyword id="KW-0221">Differentiation</keyword>
<keyword id="KW-0238">DNA-binding</keyword>
<keyword id="KW-0539">Nucleus</keyword>
<keyword id="KW-1185">Reference proteome</keyword>
<keyword id="KW-0726">Sexual differentiation</keyword>
<keyword id="KW-0804">Transcription</keyword>
<keyword id="KW-0805">Transcription regulation</keyword>
<feature type="chain" id="PRO_0000048684" description="Sex-determining region Y protein">
    <location>
        <begin position="1"/>
        <end position="221"/>
    </location>
</feature>
<feature type="DNA-binding region" description="HMG box" evidence="3">
    <location>
        <begin position="54"/>
        <end position="122"/>
    </location>
</feature>
<gene>
    <name type="primary">SRY</name>
    <name type="synonym">TDF</name>
</gene>